<comment type="function">
    <text evidence="1">E3 ubiquitin-protein ligase that acts as a regulator of the TORC1 signaling pathway. Positively regulates the TORC1 signaling pathway independently of arginine levels: acts by catalyzing 'Lys-29'-polyubiquitination and degradation of CASTOR1, releasing the GATOR2 complex from CASTOR1. Also negatively regulates the TORC1 signaling pathway in response to leucine deprivation: acts by mediating 'Lys-63'-linked polyubiquitination of SESN2, promoting SESN2-interaction with the GATOR2 complex. Also involved in protein trafficking and localization. Acts as a regulator of synaptic transmission by mediating ubiquitination and degradation of AMPAR receptor GluA2/GRIA2. Does not catalyze ubiquitination of GluA1/GRIA1. Also acts as a regulator of the recycling endosome pathway by mediating ubiquitination of VAMP3. Regulates lysosome positioning by catalyzing ubiquitination and degradation of ARL8B. Plays a role in growth regulation involved in G1/S transition by mediating, possibly by mediating ubiquitination of SLC22A18. Acts with a limited set of E2 enzymes, such as UBE2D1 and UBE2N.</text>
</comment>
<comment type="catalytic activity">
    <reaction evidence="1">
        <text>S-ubiquitinyl-[E2 ubiquitin-conjugating enzyme]-L-cysteine + [acceptor protein]-L-lysine = [E2 ubiquitin-conjugating enzyme]-L-cysteine + N(6)-ubiquitinyl-[acceptor protein]-L-lysine.</text>
        <dbReference type="EC" id="2.3.2.27"/>
    </reaction>
</comment>
<comment type="pathway">
    <text evidence="1">Protein modification; protein ubiquitination.</text>
</comment>
<comment type="subcellular location">
    <subcellularLocation>
        <location evidence="1">Lysosome membrane</location>
        <topology evidence="2">Single-pass type I membrane protein</topology>
    </subcellularLocation>
    <subcellularLocation>
        <location evidence="1">Endosome membrane</location>
        <topology evidence="2">Single-pass type I membrane protein</topology>
    </subcellularLocation>
    <subcellularLocation>
        <location evidence="1">Endomembrane system</location>
        <topology evidence="2">Single-pass membrane protein</topology>
    </subcellularLocation>
    <subcellularLocation>
        <location evidence="1">Cell membrane</location>
        <topology evidence="2">Single-pass type I membrane protein</topology>
    </subcellularLocation>
    <text evidence="1">Targeted to cytoplasmic membranes; mainly localizes to lysosomal membrane. A subpopulation localizes to the cell membrane of neurons.</text>
</comment>
<comment type="PTM">
    <text evidence="1">Autoubiquitinated in vitro in the presence of UBE2D1 and UBE2E1.</text>
</comment>
<comment type="similarity">
    <text evidence="5">Belongs to the Godzilla family.</text>
</comment>
<name>RN167_MOUSE</name>
<reference key="1">
    <citation type="journal article" date="2005" name="Science">
        <title>The transcriptional landscape of the mammalian genome.</title>
        <authorList>
            <person name="Carninci P."/>
            <person name="Kasukawa T."/>
            <person name="Katayama S."/>
            <person name="Gough J."/>
            <person name="Frith M.C."/>
            <person name="Maeda N."/>
            <person name="Oyama R."/>
            <person name="Ravasi T."/>
            <person name="Lenhard B."/>
            <person name="Wells C."/>
            <person name="Kodzius R."/>
            <person name="Shimokawa K."/>
            <person name="Bajic V.B."/>
            <person name="Brenner S.E."/>
            <person name="Batalov S."/>
            <person name="Forrest A.R."/>
            <person name="Zavolan M."/>
            <person name="Davis M.J."/>
            <person name="Wilming L.G."/>
            <person name="Aidinis V."/>
            <person name="Allen J.E."/>
            <person name="Ambesi-Impiombato A."/>
            <person name="Apweiler R."/>
            <person name="Aturaliya R.N."/>
            <person name="Bailey T.L."/>
            <person name="Bansal M."/>
            <person name="Baxter L."/>
            <person name="Beisel K.W."/>
            <person name="Bersano T."/>
            <person name="Bono H."/>
            <person name="Chalk A.M."/>
            <person name="Chiu K.P."/>
            <person name="Choudhary V."/>
            <person name="Christoffels A."/>
            <person name="Clutterbuck D.R."/>
            <person name="Crowe M.L."/>
            <person name="Dalla E."/>
            <person name="Dalrymple B.P."/>
            <person name="de Bono B."/>
            <person name="Della Gatta G."/>
            <person name="di Bernardo D."/>
            <person name="Down T."/>
            <person name="Engstrom P."/>
            <person name="Fagiolini M."/>
            <person name="Faulkner G."/>
            <person name="Fletcher C.F."/>
            <person name="Fukushima T."/>
            <person name="Furuno M."/>
            <person name="Futaki S."/>
            <person name="Gariboldi M."/>
            <person name="Georgii-Hemming P."/>
            <person name="Gingeras T.R."/>
            <person name="Gojobori T."/>
            <person name="Green R.E."/>
            <person name="Gustincich S."/>
            <person name="Harbers M."/>
            <person name="Hayashi Y."/>
            <person name="Hensch T.K."/>
            <person name="Hirokawa N."/>
            <person name="Hill D."/>
            <person name="Huminiecki L."/>
            <person name="Iacono M."/>
            <person name="Ikeo K."/>
            <person name="Iwama A."/>
            <person name="Ishikawa T."/>
            <person name="Jakt M."/>
            <person name="Kanapin A."/>
            <person name="Katoh M."/>
            <person name="Kawasawa Y."/>
            <person name="Kelso J."/>
            <person name="Kitamura H."/>
            <person name="Kitano H."/>
            <person name="Kollias G."/>
            <person name="Krishnan S.P."/>
            <person name="Kruger A."/>
            <person name="Kummerfeld S.K."/>
            <person name="Kurochkin I.V."/>
            <person name="Lareau L.F."/>
            <person name="Lazarevic D."/>
            <person name="Lipovich L."/>
            <person name="Liu J."/>
            <person name="Liuni S."/>
            <person name="McWilliam S."/>
            <person name="Madan Babu M."/>
            <person name="Madera M."/>
            <person name="Marchionni L."/>
            <person name="Matsuda H."/>
            <person name="Matsuzawa S."/>
            <person name="Miki H."/>
            <person name="Mignone F."/>
            <person name="Miyake S."/>
            <person name="Morris K."/>
            <person name="Mottagui-Tabar S."/>
            <person name="Mulder N."/>
            <person name="Nakano N."/>
            <person name="Nakauchi H."/>
            <person name="Ng P."/>
            <person name="Nilsson R."/>
            <person name="Nishiguchi S."/>
            <person name="Nishikawa S."/>
            <person name="Nori F."/>
            <person name="Ohara O."/>
            <person name="Okazaki Y."/>
            <person name="Orlando V."/>
            <person name="Pang K.C."/>
            <person name="Pavan W.J."/>
            <person name="Pavesi G."/>
            <person name="Pesole G."/>
            <person name="Petrovsky N."/>
            <person name="Piazza S."/>
            <person name="Reed J."/>
            <person name="Reid J.F."/>
            <person name="Ring B.Z."/>
            <person name="Ringwald M."/>
            <person name="Rost B."/>
            <person name="Ruan Y."/>
            <person name="Salzberg S.L."/>
            <person name="Sandelin A."/>
            <person name="Schneider C."/>
            <person name="Schoenbach C."/>
            <person name="Sekiguchi K."/>
            <person name="Semple C.A."/>
            <person name="Seno S."/>
            <person name="Sessa L."/>
            <person name="Sheng Y."/>
            <person name="Shibata Y."/>
            <person name="Shimada H."/>
            <person name="Shimada K."/>
            <person name="Silva D."/>
            <person name="Sinclair B."/>
            <person name="Sperling S."/>
            <person name="Stupka E."/>
            <person name="Sugiura K."/>
            <person name="Sultana R."/>
            <person name="Takenaka Y."/>
            <person name="Taki K."/>
            <person name="Tammoja K."/>
            <person name="Tan S.L."/>
            <person name="Tang S."/>
            <person name="Taylor M.S."/>
            <person name="Tegner J."/>
            <person name="Teichmann S.A."/>
            <person name="Ueda H.R."/>
            <person name="van Nimwegen E."/>
            <person name="Verardo R."/>
            <person name="Wei C.L."/>
            <person name="Yagi K."/>
            <person name="Yamanishi H."/>
            <person name="Zabarovsky E."/>
            <person name="Zhu S."/>
            <person name="Zimmer A."/>
            <person name="Hide W."/>
            <person name="Bult C."/>
            <person name="Grimmond S.M."/>
            <person name="Teasdale R.D."/>
            <person name="Liu E.T."/>
            <person name="Brusic V."/>
            <person name="Quackenbush J."/>
            <person name="Wahlestedt C."/>
            <person name="Mattick J.S."/>
            <person name="Hume D.A."/>
            <person name="Kai C."/>
            <person name="Sasaki D."/>
            <person name="Tomaru Y."/>
            <person name="Fukuda S."/>
            <person name="Kanamori-Katayama M."/>
            <person name="Suzuki M."/>
            <person name="Aoki J."/>
            <person name="Arakawa T."/>
            <person name="Iida J."/>
            <person name="Imamura K."/>
            <person name="Itoh M."/>
            <person name="Kato T."/>
            <person name="Kawaji H."/>
            <person name="Kawagashira N."/>
            <person name="Kawashima T."/>
            <person name="Kojima M."/>
            <person name="Kondo S."/>
            <person name="Konno H."/>
            <person name="Nakano K."/>
            <person name="Ninomiya N."/>
            <person name="Nishio T."/>
            <person name="Okada M."/>
            <person name="Plessy C."/>
            <person name="Shibata K."/>
            <person name="Shiraki T."/>
            <person name="Suzuki S."/>
            <person name="Tagami M."/>
            <person name="Waki K."/>
            <person name="Watahiki A."/>
            <person name="Okamura-Oho Y."/>
            <person name="Suzuki H."/>
            <person name="Kawai J."/>
            <person name="Hayashizaki Y."/>
        </authorList>
    </citation>
    <scope>NUCLEOTIDE SEQUENCE [LARGE SCALE MRNA]</scope>
    <source>
        <strain>NOD</strain>
        <tissue>Thymus</tissue>
    </source>
</reference>
<reference key="2">
    <citation type="journal article" date="2009" name="PLoS Biol.">
        <title>Lineage-specific biology revealed by a finished genome assembly of the mouse.</title>
        <authorList>
            <person name="Church D.M."/>
            <person name="Goodstadt L."/>
            <person name="Hillier L.W."/>
            <person name="Zody M.C."/>
            <person name="Goldstein S."/>
            <person name="She X."/>
            <person name="Bult C.J."/>
            <person name="Agarwala R."/>
            <person name="Cherry J.L."/>
            <person name="DiCuccio M."/>
            <person name="Hlavina W."/>
            <person name="Kapustin Y."/>
            <person name="Meric P."/>
            <person name="Maglott D."/>
            <person name="Birtle Z."/>
            <person name="Marques A.C."/>
            <person name="Graves T."/>
            <person name="Zhou S."/>
            <person name="Teague B."/>
            <person name="Potamousis K."/>
            <person name="Churas C."/>
            <person name="Place M."/>
            <person name="Herschleb J."/>
            <person name="Runnheim R."/>
            <person name="Forrest D."/>
            <person name="Amos-Landgraf J."/>
            <person name="Schwartz D.C."/>
            <person name="Cheng Z."/>
            <person name="Lindblad-Toh K."/>
            <person name="Eichler E.E."/>
            <person name="Ponting C.P."/>
        </authorList>
    </citation>
    <scope>NUCLEOTIDE SEQUENCE [LARGE SCALE GENOMIC DNA]</scope>
    <source>
        <strain>C57BL/6J</strain>
    </source>
</reference>
<reference key="3">
    <citation type="journal article" date="2004" name="Genome Res.">
        <title>The status, quality, and expansion of the NIH full-length cDNA project: the Mammalian Gene Collection (MGC).</title>
        <authorList>
            <consortium name="The MGC Project Team"/>
        </authorList>
    </citation>
    <scope>NUCLEOTIDE SEQUENCE [LARGE SCALE MRNA]</scope>
    <source>
        <strain>FVB/N</strain>
        <tissue>Kidney</tissue>
    </source>
</reference>
<protein>
    <recommendedName>
        <fullName evidence="5">E3 ubiquitin-protein ligase RNF167</fullName>
        <ecNumber evidence="1">2.3.2.27</ecNumber>
    </recommendedName>
    <alternativeName>
        <fullName>RING finger protein 167</fullName>
    </alternativeName>
</protein>
<keyword id="KW-1003">Cell membrane</keyword>
<keyword id="KW-0967">Endosome</keyword>
<keyword id="KW-0325">Glycoprotein</keyword>
<keyword id="KW-0458">Lysosome</keyword>
<keyword id="KW-0472">Membrane</keyword>
<keyword id="KW-0479">Metal-binding</keyword>
<keyword id="KW-1185">Reference proteome</keyword>
<keyword id="KW-0732">Signal</keyword>
<keyword id="KW-0808">Transferase</keyword>
<keyword id="KW-0812">Transmembrane</keyword>
<keyword id="KW-1133">Transmembrane helix</keyword>
<keyword id="KW-0832">Ubl conjugation</keyword>
<keyword id="KW-0833">Ubl conjugation pathway</keyword>
<keyword id="KW-0862">Zinc</keyword>
<keyword id="KW-0863">Zinc-finger</keyword>
<organism>
    <name type="scientific">Mus musculus</name>
    <name type="common">Mouse</name>
    <dbReference type="NCBI Taxonomy" id="10090"/>
    <lineage>
        <taxon>Eukaryota</taxon>
        <taxon>Metazoa</taxon>
        <taxon>Chordata</taxon>
        <taxon>Craniata</taxon>
        <taxon>Vertebrata</taxon>
        <taxon>Euteleostomi</taxon>
        <taxon>Mammalia</taxon>
        <taxon>Eutheria</taxon>
        <taxon>Euarchontoglires</taxon>
        <taxon>Glires</taxon>
        <taxon>Rodentia</taxon>
        <taxon>Myomorpha</taxon>
        <taxon>Muroidea</taxon>
        <taxon>Muridae</taxon>
        <taxon>Murinae</taxon>
        <taxon>Mus</taxon>
        <taxon>Mus</taxon>
    </lineage>
</organism>
<feature type="signal peptide" evidence="2">
    <location>
        <begin position="1"/>
        <end position="24"/>
    </location>
</feature>
<feature type="chain" id="PRO_0000245594" description="E3 ubiquitin-protein ligase RNF167">
    <location>
        <begin position="25"/>
        <end position="347"/>
    </location>
</feature>
<feature type="transmembrane region" description="Helical" evidence="2">
    <location>
        <begin position="174"/>
        <end position="194"/>
    </location>
</feature>
<feature type="domain" description="PA" evidence="2">
    <location>
        <begin position="48"/>
        <end position="152"/>
    </location>
</feature>
<feature type="zinc finger region" description="RING-type; atypical" evidence="3">
    <location>
        <begin position="230"/>
        <end position="272"/>
    </location>
</feature>
<feature type="region of interest" description="Disordered" evidence="4">
    <location>
        <begin position="271"/>
        <end position="347"/>
    </location>
</feature>
<feature type="compositionally biased region" description="Acidic residues" evidence="4">
    <location>
        <begin position="281"/>
        <end position="296"/>
    </location>
</feature>
<feature type="compositionally biased region" description="Polar residues" evidence="4">
    <location>
        <begin position="311"/>
        <end position="322"/>
    </location>
</feature>
<feature type="compositionally biased region" description="Pro residues" evidence="4">
    <location>
        <begin position="329"/>
        <end position="341"/>
    </location>
</feature>
<feature type="glycosylation site" description="N-linked (GlcNAc...) asparagine" evidence="2">
    <location>
        <position position="33"/>
    </location>
</feature>
<feature type="glycosylation site" description="N-linked (GlcNAc...) asparagine" evidence="2">
    <location>
        <position position="79"/>
    </location>
</feature>
<feature type="sequence conflict" description="In Ref. 1; BAE32356." evidence="5" ref="1">
    <original>S</original>
    <variation>F</variation>
    <location>
        <position position="343"/>
    </location>
</feature>
<dbReference type="EC" id="2.3.2.27" evidence="1"/>
<dbReference type="EMBL" id="AK154071">
    <property type="protein sequence ID" value="BAE32356.1"/>
    <property type="molecule type" value="mRNA"/>
</dbReference>
<dbReference type="EMBL" id="AL596117">
    <property type="status" value="NOT_ANNOTATED_CDS"/>
    <property type="molecule type" value="Genomic_DNA"/>
</dbReference>
<dbReference type="EMBL" id="BC010777">
    <property type="protein sequence ID" value="AAH10777.1"/>
    <property type="molecule type" value="mRNA"/>
</dbReference>
<dbReference type="CCDS" id="CCDS24959.1"/>
<dbReference type="RefSeq" id="NP_081721.1">
    <property type="nucleotide sequence ID" value="NM_027445.3"/>
</dbReference>
<dbReference type="SMR" id="Q91XF4"/>
<dbReference type="FunCoup" id="Q91XF4">
    <property type="interactions" value="3619"/>
</dbReference>
<dbReference type="STRING" id="10090.ENSMUSP00000036472"/>
<dbReference type="GlyCosmos" id="Q91XF4">
    <property type="glycosylation" value="2 sites, No reported glycans"/>
</dbReference>
<dbReference type="GlyGen" id="Q91XF4">
    <property type="glycosylation" value="2 sites"/>
</dbReference>
<dbReference type="iPTMnet" id="Q91XF4"/>
<dbReference type="PhosphoSitePlus" id="Q91XF4"/>
<dbReference type="SwissPalm" id="Q91XF4"/>
<dbReference type="PaxDb" id="10090-ENSMUSP00000036472"/>
<dbReference type="PeptideAtlas" id="Q91XF4"/>
<dbReference type="ProteomicsDB" id="299921"/>
<dbReference type="Antibodypedia" id="23476">
    <property type="antibodies" value="85 antibodies from 19 providers"/>
</dbReference>
<dbReference type="DNASU" id="70510"/>
<dbReference type="Ensembl" id="ENSMUST00000037534.8">
    <property type="protein sequence ID" value="ENSMUSP00000036472.8"/>
    <property type="gene ID" value="ENSMUSG00000040746.16"/>
</dbReference>
<dbReference type="GeneID" id="70510"/>
<dbReference type="KEGG" id="mmu:70510"/>
<dbReference type="UCSC" id="uc007jvt.1">
    <property type="organism name" value="mouse"/>
</dbReference>
<dbReference type="AGR" id="MGI:1917760"/>
<dbReference type="CTD" id="26001"/>
<dbReference type="MGI" id="MGI:1917760">
    <property type="gene designation" value="Rnf167"/>
</dbReference>
<dbReference type="VEuPathDB" id="HostDB:ENSMUSG00000040746"/>
<dbReference type="eggNOG" id="KOG4628">
    <property type="taxonomic scope" value="Eukaryota"/>
</dbReference>
<dbReference type="GeneTree" id="ENSGT00940000159547"/>
<dbReference type="HOGENOM" id="CLU_035275_1_1_1"/>
<dbReference type="InParanoid" id="Q91XF4"/>
<dbReference type="OMA" id="PSYDANT"/>
<dbReference type="OrthoDB" id="8062037at2759"/>
<dbReference type="PhylomeDB" id="Q91XF4"/>
<dbReference type="TreeFam" id="TF317486"/>
<dbReference type="UniPathway" id="UPA00143"/>
<dbReference type="BioGRID-ORCS" id="70510">
    <property type="hits" value="3 hits in 77 CRISPR screens"/>
</dbReference>
<dbReference type="ChiTaRS" id="Rnf167">
    <property type="organism name" value="mouse"/>
</dbReference>
<dbReference type="PRO" id="PR:Q91XF4"/>
<dbReference type="Proteomes" id="UP000000589">
    <property type="component" value="Chromosome 11"/>
</dbReference>
<dbReference type="RNAct" id="Q91XF4">
    <property type="molecule type" value="protein"/>
</dbReference>
<dbReference type="Bgee" id="ENSMUSG00000040746">
    <property type="expression patterns" value="Expressed in granulocyte and 260 other cell types or tissues"/>
</dbReference>
<dbReference type="ExpressionAtlas" id="Q91XF4">
    <property type="expression patterns" value="baseline and differential"/>
</dbReference>
<dbReference type="GO" id="GO:0036020">
    <property type="term" value="C:endolysosome membrane"/>
    <property type="evidence" value="ECO:0000250"/>
    <property type="project" value="UniProtKB"/>
</dbReference>
<dbReference type="GO" id="GO:0005764">
    <property type="term" value="C:lysosome"/>
    <property type="evidence" value="ECO:0000250"/>
    <property type="project" value="UniProtKB"/>
</dbReference>
<dbReference type="GO" id="GO:0005886">
    <property type="term" value="C:plasma membrane"/>
    <property type="evidence" value="ECO:0007669"/>
    <property type="project" value="UniProtKB-SubCell"/>
</dbReference>
<dbReference type="GO" id="GO:0061630">
    <property type="term" value="F:ubiquitin protein ligase activity"/>
    <property type="evidence" value="ECO:0000250"/>
    <property type="project" value="UniProtKB"/>
</dbReference>
<dbReference type="GO" id="GO:0008270">
    <property type="term" value="F:zinc ion binding"/>
    <property type="evidence" value="ECO:0007669"/>
    <property type="project" value="UniProtKB-KW"/>
</dbReference>
<dbReference type="GO" id="GO:1990253">
    <property type="term" value="P:cellular response to leucine starvation"/>
    <property type="evidence" value="ECO:0000250"/>
    <property type="project" value="UniProtKB"/>
</dbReference>
<dbReference type="GO" id="GO:0032418">
    <property type="term" value="P:lysosome localization"/>
    <property type="evidence" value="ECO:0000250"/>
    <property type="project" value="UniProtKB"/>
</dbReference>
<dbReference type="GO" id="GO:0045786">
    <property type="term" value="P:negative regulation of cell cycle"/>
    <property type="evidence" value="ECO:0007669"/>
    <property type="project" value="Ensembl"/>
</dbReference>
<dbReference type="GO" id="GO:1904262">
    <property type="term" value="P:negative regulation of TORC1 signaling"/>
    <property type="evidence" value="ECO:0000250"/>
    <property type="project" value="UniProtKB"/>
</dbReference>
<dbReference type="GO" id="GO:1904263">
    <property type="term" value="P:positive regulation of TORC1 signaling"/>
    <property type="evidence" value="ECO:0007669"/>
    <property type="project" value="Ensembl"/>
</dbReference>
<dbReference type="GO" id="GO:0035519">
    <property type="term" value="P:protein K29-linked ubiquitination"/>
    <property type="evidence" value="ECO:0007669"/>
    <property type="project" value="Ensembl"/>
</dbReference>
<dbReference type="GO" id="GO:0070534">
    <property type="term" value="P:protein K63-linked ubiquitination"/>
    <property type="evidence" value="ECO:0007669"/>
    <property type="project" value="Ensembl"/>
</dbReference>
<dbReference type="GO" id="GO:0051966">
    <property type="term" value="P:regulation of synaptic transmission, glutamatergic"/>
    <property type="evidence" value="ECO:0000250"/>
    <property type="project" value="UniProtKB"/>
</dbReference>
<dbReference type="GO" id="GO:0006511">
    <property type="term" value="P:ubiquitin-dependent protein catabolic process"/>
    <property type="evidence" value="ECO:0007669"/>
    <property type="project" value="Ensembl"/>
</dbReference>
<dbReference type="CDD" id="cd02123">
    <property type="entry name" value="PA_C_RZF_like"/>
    <property type="match status" value="1"/>
</dbReference>
<dbReference type="CDD" id="cd16797">
    <property type="entry name" value="RING-H2_RNF167"/>
    <property type="match status" value="1"/>
</dbReference>
<dbReference type="FunFam" id="3.30.40.10:FF:000099">
    <property type="entry name" value="E3 ubiquitin-protein ligase RNF167"/>
    <property type="match status" value="1"/>
</dbReference>
<dbReference type="FunFam" id="3.50.30.30:FF:000013">
    <property type="entry name" value="E3 ubiquitin-protein ligase RNF167"/>
    <property type="match status" value="1"/>
</dbReference>
<dbReference type="Gene3D" id="3.50.30.30">
    <property type="match status" value="1"/>
</dbReference>
<dbReference type="Gene3D" id="3.30.40.10">
    <property type="entry name" value="Zinc/RING finger domain, C3HC4 (zinc finger)"/>
    <property type="match status" value="1"/>
</dbReference>
<dbReference type="InterPro" id="IPR046450">
    <property type="entry name" value="PA_dom_sf"/>
</dbReference>
<dbReference type="InterPro" id="IPR003137">
    <property type="entry name" value="PA_domain"/>
</dbReference>
<dbReference type="InterPro" id="IPR051834">
    <property type="entry name" value="RING_finger_E3_ligase"/>
</dbReference>
<dbReference type="InterPro" id="IPR001841">
    <property type="entry name" value="Znf_RING"/>
</dbReference>
<dbReference type="InterPro" id="IPR011016">
    <property type="entry name" value="Znf_RING-CH"/>
</dbReference>
<dbReference type="InterPro" id="IPR013083">
    <property type="entry name" value="Znf_RING/FYVE/PHD"/>
</dbReference>
<dbReference type="InterPro" id="IPR044744">
    <property type="entry name" value="ZNRF4/RNF13/RNF167_PA"/>
</dbReference>
<dbReference type="PANTHER" id="PTHR45931:SF20">
    <property type="entry name" value="RING-TYPE E3 UBIQUITIN TRANSFERASE"/>
    <property type="match status" value="1"/>
</dbReference>
<dbReference type="PANTHER" id="PTHR45931">
    <property type="entry name" value="SI:CH211-59O9.10"/>
    <property type="match status" value="1"/>
</dbReference>
<dbReference type="Pfam" id="PF02225">
    <property type="entry name" value="PA"/>
    <property type="match status" value="1"/>
</dbReference>
<dbReference type="Pfam" id="PF13639">
    <property type="entry name" value="zf-RING_2"/>
    <property type="match status" value="1"/>
</dbReference>
<dbReference type="SMART" id="SM00184">
    <property type="entry name" value="RING"/>
    <property type="match status" value="1"/>
</dbReference>
<dbReference type="SMART" id="SM00744">
    <property type="entry name" value="RINGv"/>
    <property type="match status" value="1"/>
</dbReference>
<dbReference type="SUPFAM" id="SSF52025">
    <property type="entry name" value="PA domain"/>
    <property type="match status" value="1"/>
</dbReference>
<dbReference type="SUPFAM" id="SSF57850">
    <property type="entry name" value="RING/U-box"/>
    <property type="match status" value="1"/>
</dbReference>
<dbReference type="PROSITE" id="PS50089">
    <property type="entry name" value="ZF_RING_2"/>
    <property type="match status" value="1"/>
</dbReference>
<gene>
    <name type="primary">Rnf167</name>
</gene>
<proteinExistence type="evidence at transcript level"/>
<evidence type="ECO:0000250" key="1">
    <source>
        <dbReference type="UniProtKB" id="Q9H6Y7"/>
    </source>
</evidence>
<evidence type="ECO:0000255" key="2"/>
<evidence type="ECO:0000255" key="3">
    <source>
        <dbReference type="PROSITE-ProRule" id="PRU00175"/>
    </source>
</evidence>
<evidence type="ECO:0000256" key="4">
    <source>
        <dbReference type="SAM" id="MobiDB-lite"/>
    </source>
</evidence>
<evidence type="ECO:0000305" key="5"/>
<accession>Q91XF4</accession>
<accession>Q3U4S5</accession>
<sequence length="347" mass="38014">MHPAAFPLPVVVATVLWGAAPVRGLIRATSEHNASMDFADLPALFGATLSDEGLQGFLVEAHPENACGPIAPPPSAPVNGSVFIALLRRFDCNFDLKVLNAQKAGYGAAVVHNVNSNELLNMVWNSEEIQQQIWIPSVFIGERSAEYLRALFVYEKGARVLLVPDNSFPLGYYLIPFTGIVGLLVLAMGTVLIVRCIQHRKRLQRNRLTKEQLKQIPTHDYQKGDEYDVCAICLDEYEDGDKLRVLPCAHAYHSRCVDPWLTQTRKTCPICKQPVHRGPGDEEQEEETQEQEEGDEGEPRDQPASEWTPLLGSSPTLPTSFGSLAPAPLVFPGPSTDPSPPSSAALA</sequence>